<gene>
    <name evidence="1" type="primary">nfi</name>
    <name type="ordered locus">YN1551_2850</name>
</gene>
<feature type="chain" id="PRO_1000212981" description="Endonuclease V">
    <location>
        <begin position="1"/>
        <end position="198"/>
    </location>
</feature>
<feature type="binding site" evidence="1">
    <location>
        <position position="38"/>
    </location>
    <ligand>
        <name>Mg(2+)</name>
        <dbReference type="ChEBI" id="CHEBI:18420"/>
    </ligand>
</feature>
<feature type="binding site" evidence="1">
    <location>
        <position position="101"/>
    </location>
    <ligand>
        <name>Mg(2+)</name>
        <dbReference type="ChEBI" id="CHEBI:18420"/>
    </ligand>
</feature>
<feature type="site" description="Interaction with target DNA" evidence="1">
    <location>
        <position position="73"/>
    </location>
</feature>
<sequence>MVEKHLLEFLEKLQFLISKNVKISHYGIENVKKICGVDIAYKGNLGFSVGVSMDINSGDYNYKSYVGEVNFPYIPGFLFMREAPLMIKAIEGLDCHLLLVDGHGIAHPRKSGIATVIGVLLDFPTIGVAKSRLTGDLVNESEITYVYLNGEKVGVKFGRYFYSPGNKVDLQDCIELGKRGYPKVLKIADMLTKKIKKE</sequence>
<organism>
    <name type="scientific">Saccharolobus islandicus (strain Y.N.15.51 / Yellowstone #2)</name>
    <name type="common">Sulfolobus islandicus</name>
    <dbReference type="NCBI Taxonomy" id="419942"/>
    <lineage>
        <taxon>Archaea</taxon>
        <taxon>Thermoproteota</taxon>
        <taxon>Thermoprotei</taxon>
        <taxon>Sulfolobales</taxon>
        <taxon>Sulfolobaceae</taxon>
        <taxon>Saccharolobus</taxon>
    </lineage>
</organism>
<evidence type="ECO:0000255" key="1">
    <source>
        <dbReference type="HAMAP-Rule" id="MF_00801"/>
    </source>
</evidence>
<accession>C3NMU5</accession>
<name>NFI_SACI1</name>
<proteinExistence type="inferred from homology"/>
<protein>
    <recommendedName>
        <fullName evidence="1">Endonuclease V</fullName>
        <ecNumber evidence="1">3.1.21.7</ecNumber>
    </recommendedName>
    <alternativeName>
        <fullName evidence="1">Deoxyinosine 3'endonuclease</fullName>
    </alternativeName>
    <alternativeName>
        <fullName evidence="1">Deoxyribonuclease V</fullName>
        <shortName evidence="1">DNase V</shortName>
    </alternativeName>
</protein>
<dbReference type="EC" id="3.1.21.7" evidence="1"/>
<dbReference type="EMBL" id="CP001404">
    <property type="protein sequence ID" value="ACP49752.1"/>
    <property type="molecule type" value="Genomic_DNA"/>
</dbReference>
<dbReference type="RefSeq" id="WP_012718121.1">
    <property type="nucleotide sequence ID" value="NC_012623.1"/>
</dbReference>
<dbReference type="SMR" id="C3NMU5"/>
<dbReference type="GeneID" id="7808843"/>
<dbReference type="KEGG" id="sin:YN1551_2850"/>
<dbReference type="HOGENOM" id="CLU_047631_1_1_2"/>
<dbReference type="Proteomes" id="UP000006818">
    <property type="component" value="Chromosome"/>
</dbReference>
<dbReference type="GO" id="GO:0005737">
    <property type="term" value="C:cytoplasm"/>
    <property type="evidence" value="ECO:0007669"/>
    <property type="project" value="UniProtKB-SubCell"/>
</dbReference>
<dbReference type="GO" id="GO:0043737">
    <property type="term" value="F:deoxyribonuclease V activity"/>
    <property type="evidence" value="ECO:0007669"/>
    <property type="project" value="UniProtKB-UniRule"/>
</dbReference>
<dbReference type="GO" id="GO:0000287">
    <property type="term" value="F:magnesium ion binding"/>
    <property type="evidence" value="ECO:0007669"/>
    <property type="project" value="UniProtKB-UniRule"/>
</dbReference>
<dbReference type="GO" id="GO:0016891">
    <property type="term" value="F:RNA endonuclease activity, producing 5'-phosphomonoesters"/>
    <property type="evidence" value="ECO:0007669"/>
    <property type="project" value="TreeGrafter"/>
</dbReference>
<dbReference type="GO" id="GO:0003727">
    <property type="term" value="F:single-stranded RNA binding"/>
    <property type="evidence" value="ECO:0007669"/>
    <property type="project" value="TreeGrafter"/>
</dbReference>
<dbReference type="GO" id="GO:0006281">
    <property type="term" value="P:DNA repair"/>
    <property type="evidence" value="ECO:0007669"/>
    <property type="project" value="UniProtKB-UniRule"/>
</dbReference>
<dbReference type="CDD" id="cd06559">
    <property type="entry name" value="Endonuclease_V"/>
    <property type="match status" value="1"/>
</dbReference>
<dbReference type="FunFam" id="3.30.2170.10:FF:000006">
    <property type="entry name" value="Endonuclease V"/>
    <property type="match status" value="1"/>
</dbReference>
<dbReference type="Gene3D" id="3.30.2170.10">
    <property type="entry name" value="archaeoglobus fulgidus dsm 4304 superfamily"/>
    <property type="match status" value="1"/>
</dbReference>
<dbReference type="HAMAP" id="MF_00801">
    <property type="entry name" value="Endonuclease_5"/>
    <property type="match status" value="1"/>
</dbReference>
<dbReference type="InterPro" id="IPR007581">
    <property type="entry name" value="Endonuclease-V"/>
</dbReference>
<dbReference type="PANTHER" id="PTHR28511">
    <property type="entry name" value="ENDONUCLEASE V"/>
    <property type="match status" value="1"/>
</dbReference>
<dbReference type="PANTHER" id="PTHR28511:SF1">
    <property type="entry name" value="ENDONUCLEASE V"/>
    <property type="match status" value="1"/>
</dbReference>
<dbReference type="Pfam" id="PF04493">
    <property type="entry name" value="Endonuclease_5"/>
    <property type="match status" value="1"/>
</dbReference>
<keyword id="KW-0963">Cytoplasm</keyword>
<keyword id="KW-0227">DNA damage</keyword>
<keyword id="KW-0234">DNA repair</keyword>
<keyword id="KW-0255">Endonuclease</keyword>
<keyword id="KW-0378">Hydrolase</keyword>
<keyword id="KW-0460">Magnesium</keyword>
<keyword id="KW-0479">Metal-binding</keyword>
<keyword id="KW-0540">Nuclease</keyword>
<comment type="function">
    <text evidence="1">DNA repair enzyme involved in the repair of deaminated bases. Selectively cleaves double-stranded DNA at the second phosphodiester bond 3' to a deoxyinosine leaving behind the intact lesion on the nicked DNA.</text>
</comment>
<comment type="catalytic activity">
    <reaction evidence="1">
        <text>Endonucleolytic cleavage at apurinic or apyrimidinic sites to products with a 5'-phosphate.</text>
        <dbReference type="EC" id="3.1.21.7"/>
    </reaction>
</comment>
<comment type="cofactor">
    <cofactor evidence="1">
        <name>Mg(2+)</name>
        <dbReference type="ChEBI" id="CHEBI:18420"/>
    </cofactor>
</comment>
<comment type="subcellular location">
    <subcellularLocation>
        <location evidence="1">Cytoplasm</location>
    </subcellularLocation>
</comment>
<comment type="similarity">
    <text evidence="1">Belongs to the endonuclease V family.</text>
</comment>
<reference key="1">
    <citation type="journal article" date="2009" name="Proc. Natl. Acad. Sci. U.S.A.">
        <title>Biogeography of the Sulfolobus islandicus pan-genome.</title>
        <authorList>
            <person name="Reno M.L."/>
            <person name="Held N.L."/>
            <person name="Fields C.J."/>
            <person name="Burke P.V."/>
            <person name="Whitaker R.J."/>
        </authorList>
    </citation>
    <scope>NUCLEOTIDE SEQUENCE [LARGE SCALE GENOMIC DNA]</scope>
    <source>
        <strain>Y.N.15.51 / Yellowstone #2</strain>
    </source>
</reference>